<proteinExistence type="inferred from homology"/>
<comment type="function">
    <text evidence="1">Could be involved in insertion of integral membrane proteins into the membrane.</text>
</comment>
<comment type="subcellular location">
    <subcellularLocation>
        <location evidence="1">Cell membrane</location>
        <topology evidence="1">Peripheral membrane protein</topology>
        <orientation evidence="1">Cytoplasmic side</orientation>
    </subcellularLocation>
</comment>
<comment type="similarity">
    <text evidence="1">Belongs to the UPF0161 family.</text>
</comment>
<dbReference type="EMBL" id="CP000853">
    <property type="protein sequence ID" value="ABW20404.1"/>
    <property type="molecule type" value="Genomic_DNA"/>
</dbReference>
<dbReference type="RefSeq" id="WP_012160711.1">
    <property type="nucleotide sequence ID" value="NC_009922.1"/>
</dbReference>
<dbReference type="STRING" id="350688.Clos_2875"/>
<dbReference type="KEGG" id="aoe:Clos_2875"/>
<dbReference type="eggNOG" id="COG0759">
    <property type="taxonomic scope" value="Bacteria"/>
</dbReference>
<dbReference type="HOGENOM" id="CLU_144811_6_0_9"/>
<dbReference type="Proteomes" id="UP000000269">
    <property type="component" value="Chromosome"/>
</dbReference>
<dbReference type="GO" id="GO:0005886">
    <property type="term" value="C:plasma membrane"/>
    <property type="evidence" value="ECO:0007669"/>
    <property type="project" value="UniProtKB-SubCell"/>
</dbReference>
<dbReference type="HAMAP" id="MF_00386">
    <property type="entry name" value="UPF0161_YidD"/>
    <property type="match status" value="1"/>
</dbReference>
<dbReference type="InterPro" id="IPR002696">
    <property type="entry name" value="Membr_insert_effic_factor_YidD"/>
</dbReference>
<dbReference type="NCBIfam" id="TIGR00278">
    <property type="entry name" value="membrane protein insertion efficiency factor YidD"/>
    <property type="match status" value="1"/>
</dbReference>
<dbReference type="PANTHER" id="PTHR33383">
    <property type="entry name" value="MEMBRANE PROTEIN INSERTION EFFICIENCY FACTOR-RELATED"/>
    <property type="match status" value="1"/>
</dbReference>
<dbReference type="PANTHER" id="PTHR33383:SF1">
    <property type="entry name" value="MEMBRANE PROTEIN INSERTION EFFICIENCY FACTOR-RELATED"/>
    <property type="match status" value="1"/>
</dbReference>
<dbReference type="Pfam" id="PF01809">
    <property type="entry name" value="YidD"/>
    <property type="match status" value="1"/>
</dbReference>
<dbReference type="SMART" id="SM01234">
    <property type="entry name" value="Haemolytic"/>
    <property type="match status" value="1"/>
</dbReference>
<feature type="chain" id="PRO_1000060718" description="Putative membrane protein insertion efficiency factor">
    <location>
        <begin position="1"/>
        <end position="69"/>
    </location>
</feature>
<accession>A8MKS2</accession>
<evidence type="ECO:0000255" key="1">
    <source>
        <dbReference type="HAMAP-Rule" id="MF_00386"/>
    </source>
</evidence>
<organism>
    <name type="scientific">Alkaliphilus oremlandii (strain OhILAs)</name>
    <name type="common">Clostridium oremlandii (strain OhILAs)</name>
    <dbReference type="NCBI Taxonomy" id="350688"/>
    <lineage>
        <taxon>Bacteria</taxon>
        <taxon>Bacillati</taxon>
        <taxon>Bacillota</taxon>
        <taxon>Clostridia</taxon>
        <taxon>Peptostreptococcales</taxon>
        <taxon>Natronincolaceae</taxon>
        <taxon>Alkaliphilus</taxon>
    </lineage>
</organism>
<gene>
    <name type="ordered locus">Clos_2875</name>
</gene>
<sequence>MSRLCIFLIQIYRKYISPLKRPSCRFHPTCSAYSMAAYERYGFFKGTYLTLKRILKCHPFHPGGYDPLR</sequence>
<keyword id="KW-1003">Cell membrane</keyword>
<keyword id="KW-0472">Membrane</keyword>
<keyword id="KW-1185">Reference proteome</keyword>
<name>YIDD_ALKOO</name>
<protein>
    <recommendedName>
        <fullName evidence="1">Putative membrane protein insertion efficiency factor</fullName>
    </recommendedName>
</protein>
<reference key="1">
    <citation type="submission" date="2007-10" db="EMBL/GenBank/DDBJ databases">
        <title>Complete genome of Alkaliphilus oremlandii OhILAs.</title>
        <authorList>
            <person name="Copeland A."/>
            <person name="Lucas S."/>
            <person name="Lapidus A."/>
            <person name="Barry K."/>
            <person name="Detter J.C."/>
            <person name="Glavina del Rio T."/>
            <person name="Hammon N."/>
            <person name="Israni S."/>
            <person name="Dalin E."/>
            <person name="Tice H."/>
            <person name="Pitluck S."/>
            <person name="Chain P."/>
            <person name="Malfatti S."/>
            <person name="Shin M."/>
            <person name="Vergez L."/>
            <person name="Schmutz J."/>
            <person name="Larimer F."/>
            <person name="Land M."/>
            <person name="Hauser L."/>
            <person name="Kyrpides N."/>
            <person name="Mikhailova N."/>
            <person name="Stolz J.F."/>
            <person name="Dawson A."/>
            <person name="Fisher E."/>
            <person name="Crable B."/>
            <person name="Perera E."/>
            <person name="Lisak J."/>
            <person name="Ranganathan M."/>
            <person name="Basu P."/>
            <person name="Richardson P."/>
        </authorList>
    </citation>
    <scope>NUCLEOTIDE SEQUENCE [LARGE SCALE GENOMIC DNA]</scope>
    <source>
        <strain>OhILAs</strain>
    </source>
</reference>